<feature type="chain" id="PRO_1000044365" description="Sec-independent protein translocase protein TatA">
    <location>
        <begin position="1"/>
        <end position="77"/>
    </location>
</feature>
<feature type="transmembrane region" description="Helical" evidence="1">
    <location>
        <begin position="1"/>
        <end position="21"/>
    </location>
</feature>
<feature type="region of interest" description="Disordered" evidence="2">
    <location>
        <begin position="43"/>
        <end position="77"/>
    </location>
</feature>
<feature type="compositionally biased region" description="Basic and acidic residues" evidence="2">
    <location>
        <begin position="64"/>
        <end position="77"/>
    </location>
</feature>
<comment type="function">
    <text evidence="1">Part of the twin-arginine translocation (Tat) system that transports large folded proteins containing a characteristic twin-arginine motif in their signal peptide across membranes. TatA could form the protein-conducting channel of the Tat system.</text>
</comment>
<comment type="subunit">
    <text evidence="1">The Tat system comprises two distinct complexes: a TatABC complex, containing multiple copies of TatA, TatB and TatC subunits, and a separate TatA complex, containing only TatA subunits. Substrates initially bind to the TatABC complex, which probably triggers association of the separate TatA complex to form the active translocon.</text>
</comment>
<comment type="subcellular location">
    <subcellularLocation>
        <location evidence="1">Cell inner membrane</location>
        <topology evidence="1">Single-pass membrane protein</topology>
    </subcellularLocation>
</comment>
<comment type="similarity">
    <text evidence="1">Belongs to the TatA/E family.</text>
</comment>
<sequence length="77" mass="8152">MGGLSIWHWLIVLLIVALVFGTKKLRNIGNDLGSAVKGFKDGMKESEAPADAQQLPRSGSVNVDAKDAARSSDSNKA</sequence>
<gene>
    <name evidence="1" type="primary">tatA</name>
    <name type="ordered locus">BMA10229_A1799</name>
</gene>
<evidence type="ECO:0000255" key="1">
    <source>
        <dbReference type="HAMAP-Rule" id="MF_00236"/>
    </source>
</evidence>
<evidence type="ECO:0000256" key="2">
    <source>
        <dbReference type="SAM" id="MobiDB-lite"/>
    </source>
</evidence>
<proteinExistence type="inferred from homology"/>
<reference key="1">
    <citation type="journal article" date="2010" name="Genome Biol. Evol.">
        <title>Continuing evolution of Burkholderia mallei through genome reduction and large-scale rearrangements.</title>
        <authorList>
            <person name="Losada L."/>
            <person name="Ronning C.M."/>
            <person name="DeShazer D."/>
            <person name="Woods D."/>
            <person name="Fedorova N."/>
            <person name="Kim H.S."/>
            <person name="Shabalina S.A."/>
            <person name="Pearson T.R."/>
            <person name="Brinkac L."/>
            <person name="Tan P."/>
            <person name="Nandi T."/>
            <person name="Crabtree J."/>
            <person name="Badger J."/>
            <person name="Beckstrom-Sternberg S."/>
            <person name="Saqib M."/>
            <person name="Schutzer S.E."/>
            <person name="Keim P."/>
            <person name="Nierman W.C."/>
        </authorList>
    </citation>
    <scope>NUCLEOTIDE SEQUENCE [LARGE SCALE GENOMIC DNA]</scope>
    <source>
        <strain>NCTC 10229</strain>
    </source>
</reference>
<name>TATA_BURM9</name>
<keyword id="KW-0997">Cell inner membrane</keyword>
<keyword id="KW-1003">Cell membrane</keyword>
<keyword id="KW-0472">Membrane</keyword>
<keyword id="KW-0653">Protein transport</keyword>
<keyword id="KW-0811">Translocation</keyword>
<keyword id="KW-0812">Transmembrane</keyword>
<keyword id="KW-1133">Transmembrane helix</keyword>
<keyword id="KW-0813">Transport</keyword>
<dbReference type="EMBL" id="CP000546">
    <property type="protein sequence ID" value="ABN02165.1"/>
    <property type="molecule type" value="Genomic_DNA"/>
</dbReference>
<dbReference type="RefSeq" id="WP_004199902.1">
    <property type="nucleotide sequence ID" value="NC_008836.1"/>
</dbReference>
<dbReference type="SMR" id="A2S759"/>
<dbReference type="GeneID" id="93061745"/>
<dbReference type="KEGG" id="bml:BMA10229_A1799"/>
<dbReference type="HOGENOM" id="CLU_086034_5_3_4"/>
<dbReference type="Proteomes" id="UP000002283">
    <property type="component" value="Chromosome I"/>
</dbReference>
<dbReference type="GO" id="GO:0033281">
    <property type="term" value="C:TAT protein transport complex"/>
    <property type="evidence" value="ECO:0007669"/>
    <property type="project" value="UniProtKB-UniRule"/>
</dbReference>
<dbReference type="GO" id="GO:0008320">
    <property type="term" value="F:protein transmembrane transporter activity"/>
    <property type="evidence" value="ECO:0007669"/>
    <property type="project" value="UniProtKB-UniRule"/>
</dbReference>
<dbReference type="GO" id="GO:0043953">
    <property type="term" value="P:protein transport by the Tat complex"/>
    <property type="evidence" value="ECO:0007669"/>
    <property type="project" value="UniProtKB-UniRule"/>
</dbReference>
<dbReference type="Gene3D" id="1.20.5.3310">
    <property type="match status" value="1"/>
</dbReference>
<dbReference type="HAMAP" id="MF_00236">
    <property type="entry name" value="TatA_E"/>
    <property type="match status" value="1"/>
</dbReference>
<dbReference type="InterPro" id="IPR003369">
    <property type="entry name" value="TatA/B/E"/>
</dbReference>
<dbReference type="InterPro" id="IPR006312">
    <property type="entry name" value="TatA/E"/>
</dbReference>
<dbReference type="NCBIfam" id="NF002813">
    <property type="entry name" value="PRK02958.1"/>
    <property type="match status" value="1"/>
</dbReference>
<dbReference type="NCBIfam" id="TIGR01411">
    <property type="entry name" value="tatAE"/>
    <property type="match status" value="1"/>
</dbReference>
<dbReference type="PANTHER" id="PTHR42982">
    <property type="entry name" value="SEC-INDEPENDENT PROTEIN TRANSLOCASE PROTEIN TATA"/>
    <property type="match status" value="1"/>
</dbReference>
<dbReference type="PANTHER" id="PTHR42982:SF1">
    <property type="entry name" value="SEC-INDEPENDENT PROTEIN TRANSLOCASE PROTEIN TATA"/>
    <property type="match status" value="1"/>
</dbReference>
<dbReference type="Pfam" id="PF02416">
    <property type="entry name" value="TatA_B_E"/>
    <property type="match status" value="1"/>
</dbReference>
<accession>A2S759</accession>
<organism>
    <name type="scientific">Burkholderia mallei (strain NCTC 10229)</name>
    <dbReference type="NCBI Taxonomy" id="412022"/>
    <lineage>
        <taxon>Bacteria</taxon>
        <taxon>Pseudomonadati</taxon>
        <taxon>Pseudomonadota</taxon>
        <taxon>Betaproteobacteria</taxon>
        <taxon>Burkholderiales</taxon>
        <taxon>Burkholderiaceae</taxon>
        <taxon>Burkholderia</taxon>
        <taxon>pseudomallei group</taxon>
    </lineage>
</organism>
<protein>
    <recommendedName>
        <fullName evidence="1">Sec-independent protein translocase protein TatA</fullName>
    </recommendedName>
</protein>